<protein>
    <recommendedName>
        <fullName>Ycf53-like protein</fullName>
    </recommendedName>
</protein>
<evidence type="ECO:0000305" key="1"/>
<evidence type="ECO:0007829" key="2">
    <source>
        <dbReference type="PDB" id="7E2S"/>
    </source>
</evidence>
<comment type="similarity">
    <text evidence="1">Belongs to the ycf53 family.</text>
</comment>
<organism>
    <name type="scientific">Synechocystis sp. (strain ATCC 27184 / PCC 6803 / Kazusa)</name>
    <dbReference type="NCBI Taxonomy" id="1111708"/>
    <lineage>
        <taxon>Bacteria</taxon>
        <taxon>Bacillati</taxon>
        <taxon>Cyanobacteriota</taxon>
        <taxon>Cyanophyceae</taxon>
        <taxon>Synechococcales</taxon>
        <taxon>Merismopediaceae</taxon>
        <taxon>Synechocystis</taxon>
    </lineage>
</organism>
<feature type="chain" id="PRO_0000217384" description="Ycf53-like protein">
    <location>
        <begin position="1"/>
        <end position="233"/>
    </location>
</feature>
<feature type="helix" evidence="2">
    <location>
        <begin position="5"/>
        <end position="13"/>
    </location>
</feature>
<feature type="helix" evidence="2">
    <location>
        <begin position="17"/>
        <end position="28"/>
    </location>
</feature>
<feature type="helix" evidence="2">
    <location>
        <begin position="31"/>
        <end position="45"/>
    </location>
</feature>
<feature type="helix" evidence="2">
    <location>
        <begin position="53"/>
        <end position="64"/>
    </location>
</feature>
<feature type="helix" evidence="2">
    <location>
        <begin position="68"/>
        <end position="77"/>
    </location>
</feature>
<feature type="helix" evidence="2">
    <location>
        <begin position="94"/>
        <end position="101"/>
    </location>
</feature>
<feature type="helix" evidence="2">
    <location>
        <begin position="105"/>
        <end position="120"/>
    </location>
</feature>
<feature type="helix" evidence="2">
    <location>
        <begin position="122"/>
        <end position="127"/>
    </location>
</feature>
<feature type="helix" evidence="2">
    <location>
        <begin position="132"/>
        <end position="136"/>
    </location>
</feature>
<feature type="helix" evidence="2">
    <location>
        <begin position="140"/>
        <end position="152"/>
    </location>
</feature>
<feature type="turn" evidence="2">
    <location>
        <begin position="153"/>
        <end position="156"/>
    </location>
</feature>
<feature type="helix" evidence="2">
    <location>
        <begin position="160"/>
        <end position="169"/>
    </location>
</feature>
<feature type="turn" evidence="2">
    <location>
        <begin position="170"/>
        <end position="172"/>
    </location>
</feature>
<feature type="helix" evidence="2">
    <location>
        <begin position="174"/>
        <end position="180"/>
    </location>
</feature>
<feature type="strand" evidence="2">
    <location>
        <begin position="183"/>
        <end position="185"/>
    </location>
</feature>
<feature type="turn" evidence="2">
    <location>
        <begin position="192"/>
        <end position="195"/>
    </location>
</feature>
<feature type="helix" evidence="2">
    <location>
        <begin position="217"/>
        <end position="223"/>
    </location>
</feature>
<feature type="helix" evidence="2">
    <location>
        <begin position="227"/>
        <end position="231"/>
    </location>
</feature>
<reference key="1">
    <citation type="journal article" date="1996" name="DNA Res.">
        <title>Sequence analysis of the genome of the unicellular cyanobacterium Synechocystis sp. strain PCC6803. II. Sequence determination of the entire genome and assignment of potential protein-coding regions.</title>
        <authorList>
            <person name="Kaneko T."/>
            <person name="Sato S."/>
            <person name="Kotani H."/>
            <person name="Tanaka A."/>
            <person name="Asamizu E."/>
            <person name="Nakamura Y."/>
            <person name="Miyajima N."/>
            <person name="Hirosawa M."/>
            <person name="Sugiura M."/>
            <person name="Sasamoto S."/>
            <person name="Kimura T."/>
            <person name="Hosouchi T."/>
            <person name="Matsuno A."/>
            <person name="Muraki A."/>
            <person name="Nakazaki N."/>
            <person name="Naruo K."/>
            <person name="Okumura S."/>
            <person name="Shimpo S."/>
            <person name="Takeuchi C."/>
            <person name="Wada T."/>
            <person name="Watanabe A."/>
            <person name="Yamada M."/>
            <person name="Yasuda M."/>
            <person name="Tabata S."/>
        </authorList>
    </citation>
    <scope>NUCLEOTIDE SEQUENCE [LARGE SCALE GENOMIC DNA]</scope>
    <source>
        <strain>ATCC 27184 / PCC 6803 / Kazusa</strain>
    </source>
</reference>
<dbReference type="EMBL" id="BA000022">
    <property type="protein sequence ID" value="BAA16582.1"/>
    <property type="molecule type" value="Genomic_DNA"/>
</dbReference>
<dbReference type="PIR" id="S74430">
    <property type="entry name" value="S74430"/>
</dbReference>
<dbReference type="PDB" id="1Y6I">
    <property type="method" value="X-ray"/>
    <property type="resolution" value="1.78 A"/>
    <property type="chains" value="A=1-233"/>
</dbReference>
<dbReference type="PDB" id="4XKB">
    <property type="method" value="X-ray"/>
    <property type="resolution" value="1.50 A"/>
    <property type="chains" value="A=1-233"/>
</dbReference>
<dbReference type="PDB" id="4XKC">
    <property type="method" value="X-ray"/>
    <property type="resolution" value="2.00 A"/>
    <property type="chains" value="A=1-233"/>
</dbReference>
<dbReference type="PDB" id="7E2S">
    <property type="method" value="X-ray"/>
    <property type="resolution" value="1.05 A"/>
    <property type="chains" value="A=1-233"/>
</dbReference>
<dbReference type="PDB" id="7E2T">
    <property type="method" value="X-ray"/>
    <property type="resolution" value="1.10 A"/>
    <property type="chains" value="A=1-233"/>
</dbReference>
<dbReference type="PDB" id="7E2U">
    <property type="method" value="X-ray"/>
    <property type="resolution" value="1.70 A"/>
    <property type="chains" value="A=1-233"/>
</dbReference>
<dbReference type="PDBsum" id="1Y6I"/>
<dbReference type="PDBsum" id="4XKB"/>
<dbReference type="PDBsum" id="4XKC"/>
<dbReference type="PDBsum" id="7E2S"/>
<dbReference type="PDBsum" id="7E2T"/>
<dbReference type="PDBsum" id="7E2U"/>
<dbReference type="SMR" id="P72583"/>
<dbReference type="IntAct" id="P72583">
    <property type="interactions" value="6"/>
</dbReference>
<dbReference type="STRING" id="1148.gene:10497437"/>
<dbReference type="PaxDb" id="1148-1651654"/>
<dbReference type="EnsemblBacteria" id="BAA16582">
    <property type="protein sequence ID" value="BAA16582"/>
    <property type="gene ID" value="BAA16582"/>
</dbReference>
<dbReference type="KEGG" id="syn:sll0558"/>
<dbReference type="eggNOG" id="COG0515">
    <property type="taxonomic scope" value="Bacteria"/>
</dbReference>
<dbReference type="InParanoid" id="P72583"/>
<dbReference type="PhylomeDB" id="P72583"/>
<dbReference type="EvolutionaryTrace" id="P72583"/>
<dbReference type="Proteomes" id="UP000001425">
    <property type="component" value="Chromosome"/>
</dbReference>
<dbReference type="GO" id="GO:0046906">
    <property type="term" value="F:tetrapyrrole binding"/>
    <property type="evidence" value="ECO:0000318"/>
    <property type="project" value="GO_Central"/>
</dbReference>
<dbReference type="CDD" id="cd16383">
    <property type="entry name" value="GUN4"/>
    <property type="match status" value="1"/>
</dbReference>
<dbReference type="Gene3D" id="1.25.40.620">
    <property type="match status" value="1"/>
</dbReference>
<dbReference type="Gene3D" id="1.10.10.1770">
    <property type="entry name" value="Gun4-like"/>
    <property type="match status" value="1"/>
</dbReference>
<dbReference type="InterPro" id="IPR016024">
    <property type="entry name" value="ARM-type_fold"/>
</dbReference>
<dbReference type="InterPro" id="IPR008629">
    <property type="entry name" value="GUN4-like"/>
</dbReference>
<dbReference type="InterPro" id="IPR037215">
    <property type="entry name" value="GUN4-like_sf"/>
</dbReference>
<dbReference type="InterPro" id="IPR032192">
    <property type="entry name" value="GUN4_N"/>
</dbReference>
<dbReference type="PANTHER" id="PTHR34800">
    <property type="entry name" value="TETRAPYRROLE-BINDING PROTEIN, CHLOROPLASTIC"/>
    <property type="match status" value="1"/>
</dbReference>
<dbReference type="PANTHER" id="PTHR34800:SF1">
    <property type="entry name" value="TETRAPYRROLE-BINDING PROTEIN, CHLOROPLASTIC"/>
    <property type="match status" value="1"/>
</dbReference>
<dbReference type="Pfam" id="PF05419">
    <property type="entry name" value="GUN4"/>
    <property type="match status" value="1"/>
</dbReference>
<dbReference type="Pfam" id="PF16416">
    <property type="entry name" value="GUN4_N"/>
    <property type="match status" value="1"/>
</dbReference>
<dbReference type="SUPFAM" id="SSF48371">
    <property type="entry name" value="ARM repeat"/>
    <property type="match status" value="1"/>
</dbReference>
<dbReference type="SUPFAM" id="SSF140869">
    <property type="entry name" value="GUN4-like"/>
    <property type="match status" value="1"/>
</dbReference>
<keyword id="KW-0002">3D-structure</keyword>
<keyword id="KW-1185">Reference proteome</keyword>
<proteinExistence type="evidence at protein level"/>
<gene>
    <name type="ordered locus">sll0558</name>
</gene>
<name>YC53L_SYNY3</name>
<accession>P72583</accession>
<sequence length="233" mass="26465">MSDNLTELSQQLHDASEKKQLTAIAALAEMGEGGQGILLDYLAKNVPLEKPVLAVGNVYQTLRNLEQETITTQLQRNYPTGIFPLQSAQGIDYLPLQEALGSQDFETADEITRDKLCELAGPGASQRQWLYFTEVEKFPALDLHTINALWWLHSNGNFGFSVQRRLWLASGKEFTKLWPKIGWKSGNVWTRWPKGFTWDLSAPQGHLPLLNQLRGVRVAESLYRHPVWSQYGW</sequence>